<evidence type="ECO:0000255" key="1">
    <source>
        <dbReference type="HAMAP-Rule" id="MF_00159"/>
    </source>
</evidence>
<accession>P58667</accession>
<sequence length="349" mass="38017">MNRKETRKVKVGNIYVGGDFRVSIQSMTNTDTKDVESTVKQIKELQEAGCDIVRCAVLDMDAACAIKDIVAKINIPLVADIHFDYRLALKAIENGVSAIRINPGNIGSREKVEAVVKACKEKNIPIRIGVNSGSLSKELLTKYGKPTPDALVESALEHVKILEELDFHDIVISMKSSNVETMIESYRIASQKTNYPLHLGVTEAGTPWRGTIKSAIGIGTLLAEGIGDTIRVSLTGDPVEEIKVGKEILKNFGYVKEGIEFISCPTCGRTQIDLINIAKEVEERLSSCKKNIKVAVMGCVVNGPGEAREADIGIAGGKGEGLIFRKGEIIKKVKEEDLVEELIKIIETI</sequence>
<comment type="function">
    <text evidence="1">Converts 2C-methyl-D-erythritol 2,4-cyclodiphosphate (ME-2,4cPP) into 1-hydroxy-2-methyl-2-(E)-butenyl 4-diphosphate.</text>
</comment>
<comment type="catalytic activity">
    <reaction evidence="1">
        <text>(2E)-4-hydroxy-3-methylbut-2-enyl diphosphate + oxidized [flavodoxin] + H2O + 2 H(+) = 2-C-methyl-D-erythritol 2,4-cyclic diphosphate + reduced [flavodoxin]</text>
        <dbReference type="Rhea" id="RHEA:43604"/>
        <dbReference type="Rhea" id="RHEA-COMP:10622"/>
        <dbReference type="Rhea" id="RHEA-COMP:10623"/>
        <dbReference type="ChEBI" id="CHEBI:15377"/>
        <dbReference type="ChEBI" id="CHEBI:15378"/>
        <dbReference type="ChEBI" id="CHEBI:57618"/>
        <dbReference type="ChEBI" id="CHEBI:58210"/>
        <dbReference type="ChEBI" id="CHEBI:58483"/>
        <dbReference type="ChEBI" id="CHEBI:128753"/>
        <dbReference type="EC" id="1.17.7.3"/>
    </reaction>
</comment>
<comment type="cofactor">
    <cofactor evidence="1">
        <name>[4Fe-4S] cluster</name>
        <dbReference type="ChEBI" id="CHEBI:49883"/>
    </cofactor>
    <text evidence="1">Binds 1 [4Fe-4S] cluster.</text>
</comment>
<comment type="pathway">
    <text evidence="1">Isoprenoid biosynthesis; isopentenyl diphosphate biosynthesis via DXP pathway; isopentenyl diphosphate from 1-deoxy-D-xylulose 5-phosphate: step 5/6.</text>
</comment>
<comment type="similarity">
    <text evidence="1">Belongs to the IspG family.</text>
</comment>
<organism>
    <name type="scientific">Clostridium perfringens (strain 13 / Type A)</name>
    <dbReference type="NCBI Taxonomy" id="195102"/>
    <lineage>
        <taxon>Bacteria</taxon>
        <taxon>Bacillati</taxon>
        <taxon>Bacillota</taxon>
        <taxon>Clostridia</taxon>
        <taxon>Eubacteriales</taxon>
        <taxon>Clostridiaceae</taxon>
        <taxon>Clostridium</taxon>
    </lineage>
</organism>
<gene>
    <name evidence="1" type="primary">ispG</name>
    <name type="synonym">gcpE</name>
    <name type="ordered locus">CPE1692</name>
</gene>
<protein>
    <recommendedName>
        <fullName evidence="1">4-hydroxy-3-methylbut-2-en-1-yl diphosphate synthase (flavodoxin)</fullName>
        <ecNumber evidence="1">1.17.7.3</ecNumber>
    </recommendedName>
    <alternativeName>
        <fullName evidence="1">1-hydroxy-2-methyl-2-(E)-butenyl 4-diphosphate synthase</fullName>
    </alternativeName>
</protein>
<reference key="1">
    <citation type="journal article" date="2002" name="Proc. Natl. Acad. Sci. U.S.A.">
        <title>Complete genome sequence of Clostridium perfringens, an anaerobic flesh-eater.</title>
        <authorList>
            <person name="Shimizu T."/>
            <person name="Ohtani K."/>
            <person name="Hirakawa H."/>
            <person name="Ohshima K."/>
            <person name="Yamashita A."/>
            <person name="Shiba T."/>
            <person name="Ogasawara N."/>
            <person name="Hattori M."/>
            <person name="Kuhara S."/>
            <person name="Hayashi H."/>
        </authorList>
    </citation>
    <scope>NUCLEOTIDE SEQUENCE [LARGE SCALE GENOMIC DNA]</scope>
    <source>
        <strain>13 / Type A</strain>
    </source>
</reference>
<keyword id="KW-0004">4Fe-4S</keyword>
<keyword id="KW-0408">Iron</keyword>
<keyword id="KW-0411">Iron-sulfur</keyword>
<keyword id="KW-0414">Isoprene biosynthesis</keyword>
<keyword id="KW-0479">Metal-binding</keyword>
<keyword id="KW-0560">Oxidoreductase</keyword>
<keyword id="KW-1185">Reference proteome</keyword>
<dbReference type="EC" id="1.17.7.3" evidence="1"/>
<dbReference type="EMBL" id="BA000016">
    <property type="protein sequence ID" value="BAB81398.1"/>
    <property type="molecule type" value="Genomic_DNA"/>
</dbReference>
<dbReference type="RefSeq" id="WP_011010566.1">
    <property type="nucleotide sequence ID" value="NC_003366.1"/>
</dbReference>
<dbReference type="SMR" id="P58667"/>
<dbReference type="STRING" id="195102.gene:10490956"/>
<dbReference type="KEGG" id="cpe:CPE1692"/>
<dbReference type="HOGENOM" id="CLU_042258_0_0_9"/>
<dbReference type="UniPathway" id="UPA00056">
    <property type="reaction ID" value="UER00096"/>
</dbReference>
<dbReference type="Proteomes" id="UP000000818">
    <property type="component" value="Chromosome"/>
</dbReference>
<dbReference type="GO" id="GO:0051539">
    <property type="term" value="F:4 iron, 4 sulfur cluster binding"/>
    <property type="evidence" value="ECO:0007669"/>
    <property type="project" value="UniProtKB-UniRule"/>
</dbReference>
<dbReference type="GO" id="GO:0046429">
    <property type="term" value="F:4-hydroxy-3-methylbut-2-en-1-yl diphosphate synthase activity (ferredoxin)"/>
    <property type="evidence" value="ECO:0007669"/>
    <property type="project" value="UniProtKB-UniRule"/>
</dbReference>
<dbReference type="GO" id="GO:0141197">
    <property type="term" value="F:4-hydroxy-3-methylbut-2-enyl-diphosphate synthase activity (flavodoxin)"/>
    <property type="evidence" value="ECO:0007669"/>
    <property type="project" value="UniProtKB-EC"/>
</dbReference>
<dbReference type="GO" id="GO:0005506">
    <property type="term" value="F:iron ion binding"/>
    <property type="evidence" value="ECO:0007669"/>
    <property type="project" value="InterPro"/>
</dbReference>
<dbReference type="GO" id="GO:0019288">
    <property type="term" value="P:isopentenyl diphosphate biosynthetic process, methylerythritol 4-phosphate pathway"/>
    <property type="evidence" value="ECO:0007669"/>
    <property type="project" value="UniProtKB-UniRule"/>
</dbReference>
<dbReference type="GO" id="GO:0016114">
    <property type="term" value="P:terpenoid biosynthetic process"/>
    <property type="evidence" value="ECO:0007669"/>
    <property type="project" value="InterPro"/>
</dbReference>
<dbReference type="FunFam" id="3.20.20.20:FF:000001">
    <property type="entry name" value="4-hydroxy-3-methylbut-2-en-1-yl diphosphate synthase (flavodoxin)"/>
    <property type="match status" value="1"/>
</dbReference>
<dbReference type="FunFam" id="3.30.413.10:FF:000005">
    <property type="entry name" value="4-hydroxy-3-methylbut-2-en-1-yl diphosphate synthase (flavodoxin)"/>
    <property type="match status" value="1"/>
</dbReference>
<dbReference type="Gene3D" id="3.20.20.20">
    <property type="entry name" value="Dihydropteroate synthase-like"/>
    <property type="match status" value="1"/>
</dbReference>
<dbReference type="Gene3D" id="3.30.413.10">
    <property type="entry name" value="Sulfite Reductase Hemoprotein, domain 1"/>
    <property type="match status" value="1"/>
</dbReference>
<dbReference type="HAMAP" id="MF_00159">
    <property type="entry name" value="IspG"/>
    <property type="match status" value="1"/>
</dbReference>
<dbReference type="InterPro" id="IPR011005">
    <property type="entry name" value="Dihydropteroate_synth-like_sf"/>
</dbReference>
<dbReference type="InterPro" id="IPR016425">
    <property type="entry name" value="IspG_bac"/>
</dbReference>
<dbReference type="InterPro" id="IPR004588">
    <property type="entry name" value="IspG_bac-typ"/>
</dbReference>
<dbReference type="InterPro" id="IPR045854">
    <property type="entry name" value="NO2/SO3_Rdtase_4Fe4S_sf"/>
</dbReference>
<dbReference type="NCBIfam" id="TIGR00612">
    <property type="entry name" value="ispG_gcpE"/>
    <property type="match status" value="1"/>
</dbReference>
<dbReference type="NCBIfam" id="NF001540">
    <property type="entry name" value="PRK00366.1"/>
    <property type="match status" value="1"/>
</dbReference>
<dbReference type="PANTHER" id="PTHR30454">
    <property type="entry name" value="4-HYDROXY-3-METHYLBUT-2-EN-1-YL DIPHOSPHATE SYNTHASE"/>
    <property type="match status" value="1"/>
</dbReference>
<dbReference type="PANTHER" id="PTHR30454:SF0">
    <property type="entry name" value="4-HYDROXY-3-METHYLBUT-2-EN-1-YL DIPHOSPHATE SYNTHASE (FERREDOXIN), CHLOROPLASTIC"/>
    <property type="match status" value="1"/>
</dbReference>
<dbReference type="Pfam" id="PF04551">
    <property type="entry name" value="GcpE"/>
    <property type="match status" value="1"/>
</dbReference>
<dbReference type="PIRSF" id="PIRSF004640">
    <property type="entry name" value="IspG"/>
    <property type="match status" value="1"/>
</dbReference>
<dbReference type="SUPFAM" id="SSF51717">
    <property type="entry name" value="Dihydropteroate synthetase-like"/>
    <property type="match status" value="1"/>
</dbReference>
<dbReference type="SUPFAM" id="SSF56014">
    <property type="entry name" value="Nitrite and sulphite reductase 4Fe-4S domain-like"/>
    <property type="match status" value="1"/>
</dbReference>
<name>ISPG_CLOPE</name>
<feature type="chain" id="PRO_0000190564" description="4-hydroxy-3-methylbut-2-en-1-yl diphosphate synthase (flavodoxin)">
    <location>
        <begin position="1"/>
        <end position="349"/>
    </location>
</feature>
<feature type="binding site" evidence="1">
    <location>
        <position position="264"/>
    </location>
    <ligand>
        <name>[4Fe-4S] cluster</name>
        <dbReference type="ChEBI" id="CHEBI:49883"/>
    </ligand>
</feature>
<feature type="binding site" evidence="1">
    <location>
        <position position="267"/>
    </location>
    <ligand>
        <name>[4Fe-4S] cluster</name>
        <dbReference type="ChEBI" id="CHEBI:49883"/>
    </ligand>
</feature>
<feature type="binding site" evidence="1">
    <location>
        <position position="299"/>
    </location>
    <ligand>
        <name>[4Fe-4S] cluster</name>
        <dbReference type="ChEBI" id="CHEBI:49883"/>
    </ligand>
</feature>
<feature type="binding site" evidence="1">
    <location>
        <position position="306"/>
    </location>
    <ligand>
        <name>[4Fe-4S] cluster</name>
        <dbReference type="ChEBI" id="CHEBI:49883"/>
    </ligand>
</feature>
<proteinExistence type="inferred from homology"/>